<reference key="1">
    <citation type="submission" date="2007-02" db="EMBL/GenBank/DDBJ databases">
        <title>Complete sequence of chromosome of Shewanella baltica OS155.</title>
        <authorList>
            <consortium name="US DOE Joint Genome Institute"/>
            <person name="Copeland A."/>
            <person name="Lucas S."/>
            <person name="Lapidus A."/>
            <person name="Barry K."/>
            <person name="Detter J.C."/>
            <person name="Glavina del Rio T."/>
            <person name="Hammon N."/>
            <person name="Israni S."/>
            <person name="Dalin E."/>
            <person name="Tice H."/>
            <person name="Pitluck S."/>
            <person name="Sims D.R."/>
            <person name="Brettin T."/>
            <person name="Bruce D."/>
            <person name="Han C."/>
            <person name="Tapia R."/>
            <person name="Brainard J."/>
            <person name="Schmutz J."/>
            <person name="Larimer F."/>
            <person name="Land M."/>
            <person name="Hauser L."/>
            <person name="Kyrpides N."/>
            <person name="Mikhailova N."/>
            <person name="Brettar I."/>
            <person name="Klappenbach J."/>
            <person name="Konstantinidis K."/>
            <person name="Rodrigues J."/>
            <person name="Tiedje J."/>
            <person name="Richardson P."/>
        </authorList>
    </citation>
    <scope>NUCLEOTIDE SEQUENCE [LARGE SCALE GENOMIC DNA]</scope>
    <source>
        <strain>OS155 / ATCC BAA-1091</strain>
    </source>
</reference>
<dbReference type="EMBL" id="CP000563">
    <property type="protein sequence ID" value="ABN59911.1"/>
    <property type="molecule type" value="Genomic_DNA"/>
</dbReference>
<dbReference type="RefSeq" id="WP_006079871.1">
    <property type="nucleotide sequence ID" value="NC_009052.1"/>
</dbReference>
<dbReference type="SMR" id="A3CZJ8"/>
<dbReference type="STRING" id="325240.Sbal_0379"/>
<dbReference type="GeneID" id="94729699"/>
<dbReference type="KEGG" id="sbl:Sbal_0379"/>
<dbReference type="HOGENOM" id="CLU_190949_1_1_6"/>
<dbReference type="OrthoDB" id="21586at2"/>
<dbReference type="Proteomes" id="UP000001557">
    <property type="component" value="Chromosome"/>
</dbReference>
<dbReference type="GO" id="GO:0022625">
    <property type="term" value="C:cytosolic large ribosomal subunit"/>
    <property type="evidence" value="ECO:0007669"/>
    <property type="project" value="TreeGrafter"/>
</dbReference>
<dbReference type="GO" id="GO:0003735">
    <property type="term" value="F:structural constituent of ribosome"/>
    <property type="evidence" value="ECO:0007669"/>
    <property type="project" value="InterPro"/>
</dbReference>
<dbReference type="GO" id="GO:0006412">
    <property type="term" value="P:translation"/>
    <property type="evidence" value="ECO:0007669"/>
    <property type="project" value="UniProtKB-UniRule"/>
</dbReference>
<dbReference type="FunFam" id="2.20.28.120:FF:000001">
    <property type="entry name" value="50S ribosomal protein L33"/>
    <property type="match status" value="1"/>
</dbReference>
<dbReference type="Gene3D" id="2.20.28.120">
    <property type="entry name" value="Ribosomal protein L33"/>
    <property type="match status" value="1"/>
</dbReference>
<dbReference type="HAMAP" id="MF_00294">
    <property type="entry name" value="Ribosomal_bL33"/>
    <property type="match status" value="1"/>
</dbReference>
<dbReference type="InterPro" id="IPR001705">
    <property type="entry name" value="Ribosomal_bL33"/>
</dbReference>
<dbReference type="InterPro" id="IPR018264">
    <property type="entry name" value="Ribosomal_bL33_CS"/>
</dbReference>
<dbReference type="InterPro" id="IPR038584">
    <property type="entry name" value="Ribosomal_bL33_sf"/>
</dbReference>
<dbReference type="InterPro" id="IPR011332">
    <property type="entry name" value="Ribosomal_zn-bd"/>
</dbReference>
<dbReference type="NCBIfam" id="NF001860">
    <property type="entry name" value="PRK00595.1"/>
    <property type="match status" value="1"/>
</dbReference>
<dbReference type="NCBIfam" id="TIGR01023">
    <property type="entry name" value="rpmG_bact"/>
    <property type="match status" value="1"/>
</dbReference>
<dbReference type="PANTHER" id="PTHR15238">
    <property type="entry name" value="54S RIBOSOMAL PROTEIN L39, MITOCHONDRIAL"/>
    <property type="match status" value="1"/>
</dbReference>
<dbReference type="PANTHER" id="PTHR15238:SF1">
    <property type="entry name" value="LARGE RIBOSOMAL SUBUNIT PROTEIN BL33M"/>
    <property type="match status" value="1"/>
</dbReference>
<dbReference type="Pfam" id="PF00471">
    <property type="entry name" value="Ribosomal_L33"/>
    <property type="match status" value="1"/>
</dbReference>
<dbReference type="SUPFAM" id="SSF57829">
    <property type="entry name" value="Zn-binding ribosomal proteins"/>
    <property type="match status" value="1"/>
</dbReference>
<dbReference type="PROSITE" id="PS00582">
    <property type="entry name" value="RIBOSOMAL_L33"/>
    <property type="match status" value="1"/>
</dbReference>
<sequence length="57" mass="6733">MAKAKGNREKIKLVSTAKTGHFYTTEKNKRNMPEKMEIKKFDPVIRQHVIYKEAKIK</sequence>
<protein>
    <recommendedName>
        <fullName evidence="1">Large ribosomal subunit protein bL33</fullName>
    </recommendedName>
    <alternativeName>
        <fullName evidence="2">50S ribosomal protein L33</fullName>
    </alternativeName>
</protein>
<organism>
    <name type="scientific">Shewanella baltica (strain OS155 / ATCC BAA-1091)</name>
    <dbReference type="NCBI Taxonomy" id="325240"/>
    <lineage>
        <taxon>Bacteria</taxon>
        <taxon>Pseudomonadati</taxon>
        <taxon>Pseudomonadota</taxon>
        <taxon>Gammaproteobacteria</taxon>
        <taxon>Alteromonadales</taxon>
        <taxon>Shewanellaceae</taxon>
        <taxon>Shewanella</taxon>
    </lineage>
</organism>
<name>RL33_SHEB5</name>
<feature type="chain" id="PRO_0000356653" description="Large ribosomal subunit protein bL33">
    <location>
        <begin position="1"/>
        <end position="57"/>
    </location>
</feature>
<proteinExistence type="inferred from homology"/>
<accession>A3CZJ8</accession>
<evidence type="ECO:0000255" key="1">
    <source>
        <dbReference type="HAMAP-Rule" id="MF_00294"/>
    </source>
</evidence>
<evidence type="ECO:0000305" key="2"/>
<gene>
    <name evidence="1" type="primary">rpmG</name>
    <name type="ordered locus">Sbal_0379</name>
</gene>
<comment type="similarity">
    <text evidence="1">Belongs to the bacterial ribosomal protein bL33 family.</text>
</comment>
<keyword id="KW-1185">Reference proteome</keyword>
<keyword id="KW-0687">Ribonucleoprotein</keyword>
<keyword id="KW-0689">Ribosomal protein</keyword>